<keyword id="KW-0496">Mitochondrion</keyword>
<keyword id="KW-1185">Reference proteome</keyword>
<keyword id="KW-0687">Ribonucleoprotein</keyword>
<keyword id="KW-0689">Ribosomal protein</keyword>
<keyword id="KW-0943">RNA-mediated gene silencing</keyword>
<keyword id="KW-0810">Translation regulation</keyword>
<proteinExistence type="evidence at transcript level"/>
<feature type="chain" id="PRO_0000087686" description="Large ribosomal subunit protein mL39">
    <location>
        <begin position="1"/>
        <end position="333"/>
    </location>
</feature>
<feature type="domain" description="TGS" evidence="2">
    <location>
        <begin position="56"/>
        <end position="122"/>
    </location>
</feature>
<feature type="region of interest" description="Disordered" evidence="3">
    <location>
        <begin position="311"/>
        <end position="333"/>
    </location>
</feature>
<organism>
    <name type="scientific">Drosophila melanogaster</name>
    <name type="common">Fruit fly</name>
    <dbReference type="NCBI Taxonomy" id="7227"/>
    <lineage>
        <taxon>Eukaryota</taxon>
        <taxon>Metazoa</taxon>
        <taxon>Ecdysozoa</taxon>
        <taxon>Arthropoda</taxon>
        <taxon>Hexapoda</taxon>
        <taxon>Insecta</taxon>
        <taxon>Pterygota</taxon>
        <taxon>Neoptera</taxon>
        <taxon>Endopterygota</taxon>
        <taxon>Diptera</taxon>
        <taxon>Brachycera</taxon>
        <taxon>Muscomorpha</taxon>
        <taxon>Ephydroidea</taxon>
        <taxon>Drosophilidae</taxon>
        <taxon>Drosophila</taxon>
        <taxon>Sophophora</taxon>
    </lineage>
</organism>
<sequence length="333" mass="37324">MSAATKLHKTSWCALRQLQQYRTKANFSGSSASLAKRNDLFNQEQRRQRDAVGRIDKIEVRYLGLPEDVTLVMNGNISTPFNCAQHLSEGHCKRSALALIDGSVPWDMHRPLQESCTLQLLNFHVSEPHVVNKAFWRTCSFMLGAALNRAFKPEANLQLHSFPGPNIKSGSFVHDIVLQTQNWEPGKEEMRALSAEMVKLAAQDLRIERLDVQQDLAQEMFKDSKYKSEQLPSISQQTNGRVTLYRLGDHIDISRGPMVASTSFLGKCVISAAHKVAEEGPSGAFYRIQGVALPSGFQLNHVAFGVLEERSKKPSPARLPNEPFEEQQQLQLS</sequence>
<name>RM39_DROME</name>
<protein>
    <recommendedName>
        <fullName evidence="4">Large ribosomal subunit protein mL39</fullName>
    </recommendedName>
    <alternativeName>
        <fullName>39S ribosomal protein L39, mitochondrial</fullName>
        <shortName>MRP-L39</shortName>
    </alternativeName>
    <alternativeName>
        <fullName>MRP-L5</fullName>
    </alternativeName>
</protein>
<comment type="subunit">
    <text evidence="1">Component of the mitochondrial ribosome large subunit (39S) which comprises a 16S rRNA and about 50 distinct proteins.</text>
</comment>
<comment type="subcellular location">
    <subcellularLocation>
        <location evidence="1">Mitochondrion</location>
    </subcellularLocation>
</comment>
<comment type="similarity">
    <text evidence="4">Belongs to the mitochondrion-specific ribosomal protein mL39 family.</text>
</comment>
<comment type="sequence caution" evidence="4">
    <conflict type="frameshift">
        <sequence resource="EMBL-CDS" id="AAL49047"/>
    </conflict>
</comment>
<reference key="1">
    <citation type="journal article" date="2000" name="Science">
        <title>The genome sequence of Drosophila melanogaster.</title>
        <authorList>
            <person name="Adams M.D."/>
            <person name="Celniker S.E."/>
            <person name="Holt R.A."/>
            <person name="Evans C.A."/>
            <person name="Gocayne J.D."/>
            <person name="Amanatides P.G."/>
            <person name="Scherer S.E."/>
            <person name="Li P.W."/>
            <person name="Hoskins R.A."/>
            <person name="Galle R.F."/>
            <person name="George R.A."/>
            <person name="Lewis S.E."/>
            <person name="Richards S."/>
            <person name="Ashburner M."/>
            <person name="Henderson S.N."/>
            <person name="Sutton G.G."/>
            <person name="Wortman J.R."/>
            <person name="Yandell M.D."/>
            <person name="Zhang Q."/>
            <person name="Chen L.X."/>
            <person name="Brandon R.C."/>
            <person name="Rogers Y.-H.C."/>
            <person name="Blazej R.G."/>
            <person name="Champe M."/>
            <person name="Pfeiffer B.D."/>
            <person name="Wan K.H."/>
            <person name="Doyle C."/>
            <person name="Baxter E.G."/>
            <person name="Helt G."/>
            <person name="Nelson C.R."/>
            <person name="Miklos G.L.G."/>
            <person name="Abril J.F."/>
            <person name="Agbayani A."/>
            <person name="An H.-J."/>
            <person name="Andrews-Pfannkoch C."/>
            <person name="Baldwin D."/>
            <person name="Ballew R.M."/>
            <person name="Basu A."/>
            <person name="Baxendale J."/>
            <person name="Bayraktaroglu L."/>
            <person name="Beasley E.M."/>
            <person name="Beeson K.Y."/>
            <person name="Benos P.V."/>
            <person name="Berman B.P."/>
            <person name="Bhandari D."/>
            <person name="Bolshakov S."/>
            <person name="Borkova D."/>
            <person name="Botchan M.R."/>
            <person name="Bouck J."/>
            <person name="Brokstein P."/>
            <person name="Brottier P."/>
            <person name="Burtis K.C."/>
            <person name="Busam D.A."/>
            <person name="Butler H."/>
            <person name="Cadieu E."/>
            <person name="Center A."/>
            <person name="Chandra I."/>
            <person name="Cherry J.M."/>
            <person name="Cawley S."/>
            <person name="Dahlke C."/>
            <person name="Davenport L.B."/>
            <person name="Davies P."/>
            <person name="de Pablos B."/>
            <person name="Delcher A."/>
            <person name="Deng Z."/>
            <person name="Mays A.D."/>
            <person name="Dew I."/>
            <person name="Dietz S.M."/>
            <person name="Dodson K."/>
            <person name="Doup L.E."/>
            <person name="Downes M."/>
            <person name="Dugan-Rocha S."/>
            <person name="Dunkov B.C."/>
            <person name="Dunn P."/>
            <person name="Durbin K.J."/>
            <person name="Evangelista C.C."/>
            <person name="Ferraz C."/>
            <person name="Ferriera S."/>
            <person name="Fleischmann W."/>
            <person name="Fosler C."/>
            <person name="Gabrielian A.E."/>
            <person name="Garg N.S."/>
            <person name="Gelbart W.M."/>
            <person name="Glasser K."/>
            <person name="Glodek A."/>
            <person name="Gong F."/>
            <person name="Gorrell J.H."/>
            <person name="Gu Z."/>
            <person name="Guan P."/>
            <person name="Harris M."/>
            <person name="Harris N.L."/>
            <person name="Harvey D.A."/>
            <person name="Heiman T.J."/>
            <person name="Hernandez J.R."/>
            <person name="Houck J."/>
            <person name="Hostin D."/>
            <person name="Houston K.A."/>
            <person name="Howland T.J."/>
            <person name="Wei M.-H."/>
            <person name="Ibegwam C."/>
            <person name="Jalali M."/>
            <person name="Kalush F."/>
            <person name="Karpen G.H."/>
            <person name="Ke Z."/>
            <person name="Kennison J.A."/>
            <person name="Ketchum K.A."/>
            <person name="Kimmel B.E."/>
            <person name="Kodira C.D."/>
            <person name="Kraft C.L."/>
            <person name="Kravitz S."/>
            <person name="Kulp D."/>
            <person name="Lai Z."/>
            <person name="Lasko P."/>
            <person name="Lei Y."/>
            <person name="Levitsky A.A."/>
            <person name="Li J.H."/>
            <person name="Li Z."/>
            <person name="Liang Y."/>
            <person name="Lin X."/>
            <person name="Liu X."/>
            <person name="Mattei B."/>
            <person name="McIntosh T.C."/>
            <person name="McLeod M.P."/>
            <person name="McPherson D."/>
            <person name="Merkulov G."/>
            <person name="Milshina N.V."/>
            <person name="Mobarry C."/>
            <person name="Morris J."/>
            <person name="Moshrefi A."/>
            <person name="Mount S.M."/>
            <person name="Moy M."/>
            <person name="Murphy B."/>
            <person name="Murphy L."/>
            <person name="Muzny D.M."/>
            <person name="Nelson D.L."/>
            <person name="Nelson D.R."/>
            <person name="Nelson K.A."/>
            <person name="Nixon K."/>
            <person name="Nusskern D.R."/>
            <person name="Pacleb J.M."/>
            <person name="Palazzolo M."/>
            <person name="Pittman G.S."/>
            <person name="Pan S."/>
            <person name="Pollard J."/>
            <person name="Puri V."/>
            <person name="Reese M.G."/>
            <person name="Reinert K."/>
            <person name="Remington K."/>
            <person name="Saunders R.D.C."/>
            <person name="Scheeler F."/>
            <person name="Shen H."/>
            <person name="Shue B.C."/>
            <person name="Siden-Kiamos I."/>
            <person name="Simpson M."/>
            <person name="Skupski M.P."/>
            <person name="Smith T.J."/>
            <person name="Spier E."/>
            <person name="Spradling A.C."/>
            <person name="Stapleton M."/>
            <person name="Strong R."/>
            <person name="Sun E."/>
            <person name="Svirskas R."/>
            <person name="Tector C."/>
            <person name="Turner R."/>
            <person name="Venter E."/>
            <person name="Wang A.H."/>
            <person name="Wang X."/>
            <person name="Wang Z.-Y."/>
            <person name="Wassarman D.A."/>
            <person name="Weinstock G.M."/>
            <person name="Weissenbach J."/>
            <person name="Williams S.M."/>
            <person name="Woodage T."/>
            <person name="Worley K.C."/>
            <person name="Wu D."/>
            <person name="Yang S."/>
            <person name="Yao Q.A."/>
            <person name="Ye J."/>
            <person name="Yeh R.-F."/>
            <person name="Zaveri J.S."/>
            <person name="Zhan M."/>
            <person name="Zhang G."/>
            <person name="Zhao Q."/>
            <person name="Zheng L."/>
            <person name="Zheng X.H."/>
            <person name="Zhong F.N."/>
            <person name="Zhong W."/>
            <person name="Zhou X."/>
            <person name="Zhu S.C."/>
            <person name="Zhu X."/>
            <person name="Smith H.O."/>
            <person name="Gibbs R.A."/>
            <person name="Myers E.W."/>
            <person name="Rubin G.M."/>
            <person name="Venter J.C."/>
        </authorList>
    </citation>
    <scope>NUCLEOTIDE SEQUENCE [LARGE SCALE GENOMIC DNA]</scope>
    <source>
        <strain>Berkeley</strain>
    </source>
</reference>
<reference key="2">
    <citation type="journal article" date="2002" name="Genome Biol.">
        <title>Annotation of the Drosophila melanogaster euchromatic genome: a systematic review.</title>
        <authorList>
            <person name="Misra S."/>
            <person name="Crosby M.A."/>
            <person name="Mungall C.J."/>
            <person name="Matthews B.B."/>
            <person name="Campbell K.S."/>
            <person name="Hradecky P."/>
            <person name="Huang Y."/>
            <person name="Kaminker J.S."/>
            <person name="Millburn G.H."/>
            <person name="Prochnik S.E."/>
            <person name="Smith C.D."/>
            <person name="Tupy J.L."/>
            <person name="Whitfield E.J."/>
            <person name="Bayraktaroglu L."/>
            <person name="Berman B.P."/>
            <person name="Bettencourt B.R."/>
            <person name="Celniker S.E."/>
            <person name="de Grey A.D.N.J."/>
            <person name="Drysdale R.A."/>
            <person name="Harris N.L."/>
            <person name="Richter J."/>
            <person name="Russo S."/>
            <person name="Schroeder A.J."/>
            <person name="Shu S.Q."/>
            <person name="Stapleton M."/>
            <person name="Yamada C."/>
            <person name="Ashburner M."/>
            <person name="Gelbart W.M."/>
            <person name="Rubin G.M."/>
            <person name="Lewis S.E."/>
        </authorList>
    </citation>
    <scope>GENOME REANNOTATION</scope>
    <source>
        <strain>Berkeley</strain>
    </source>
</reference>
<reference key="3">
    <citation type="journal article" date="2002" name="Genome Biol.">
        <title>A Drosophila full-length cDNA resource.</title>
        <authorList>
            <person name="Stapleton M."/>
            <person name="Carlson J.W."/>
            <person name="Brokstein P."/>
            <person name="Yu C."/>
            <person name="Champe M."/>
            <person name="George R.A."/>
            <person name="Guarin H."/>
            <person name="Kronmiller B."/>
            <person name="Pacleb J.M."/>
            <person name="Park S."/>
            <person name="Wan K.H."/>
            <person name="Rubin G.M."/>
            <person name="Celniker S.E."/>
        </authorList>
    </citation>
    <scope>NUCLEOTIDE SEQUENCE [LARGE SCALE MRNA]</scope>
    <source>
        <strain>Berkeley</strain>
        <tissue>Embryo</tissue>
    </source>
</reference>
<evidence type="ECO:0000250" key="1">
    <source>
        <dbReference type="UniProtKB" id="Q9NYK5"/>
    </source>
</evidence>
<evidence type="ECO:0000255" key="2">
    <source>
        <dbReference type="PROSITE-ProRule" id="PRU01228"/>
    </source>
</evidence>
<evidence type="ECO:0000256" key="3">
    <source>
        <dbReference type="SAM" id="MobiDB-lite"/>
    </source>
</evidence>
<evidence type="ECO:0000305" key="4"/>
<gene>
    <name type="primary">mRpL39</name>
    <name type="synonym">mRpL5</name>
    <name type="ORF">CG17166</name>
</gene>
<accession>Q9VUJ0</accession>
<accession>Q8SYN5</accession>
<dbReference type="EMBL" id="AE014296">
    <property type="protein sequence ID" value="AAF49686.2"/>
    <property type="molecule type" value="Genomic_DNA"/>
</dbReference>
<dbReference type="EMBL" id="AY071425">
    <property type="protein sequence ID" value="AAL49047.1"/>
    <property type="status" value="ALT_FRAME"/>
    <property type="molecule type" value="mRNA"/>
</dbReference>
<dbReference type="RefSeq" id="NP_524075.2">
    <property type="nucleotide sequence ID" value="NM_079351.4"/>
</dbReference>
<dbReference type="SMR" id="Q9VUJ0"/>
<dbReference type="BioGRID" id="64951">
    <property type="interactions" value="4"/>
</dbReference>
<dbReference type="DIP" id="DIP-20391N"/>
<dbReference type="FunCoup" id="Q9VUJ0">
    <property type="interactions" value="1454"/>
</dbReference>
<dbReference type="IntAct" id="Q9VUJ0">
    <property type="interactions" value="93"/>
</dbReference>
<dbReference type="STRING" id="7227.FBpp0075425"/>
<dbReference type="PaxDb" id="7227-FBpp0075425"/>
<dbReference type="DNASU" id="39627"/>
<dbReference type="EnsemblMetazoa" id="FBtr0075672">
    <property type="protein sequence ID" value="FBpp0075425"/>
    <property type="gene ID" value="FBgn0036462"/>
</dbReference>
<dbReference type="GeneID" id="39627"/>
<dbReference type="KEGG" id="dme:Dmel_CG17166"/>
<dbReference type="AGR" id="FB:FBgn0036462"/>
<dbReference type="CTD" id="54148"/>
<dbReference type="FlyBase" id="FBgn0036462">
    <property type="gene designation" value="mRpL39"/>
</dbReference>
<dbReference type="VEuPathDB" id="VectorBase:FBgn0036462"/>
<dbReference type="eggNOG" id="KOG1637">
    <property type="taxonomic scope" value="Eukaryota"/>
</dbReference>
<dbReference type="GeneTree" id="ENSGT00940000156271"/>
<dbReference type="HOGENOM" id="CLU_071313_0_0_1"/>
<dbReference type="InParanoid" id="Q9VUJ0"/>
<dbReference type="OMA" id="YNCAQHL"/>
<dbReference type="OrthoDB" id="5870821at2759"/>
<dbReference type="PhylomeDB" id="Q9VUJ0"/>
<dbReference type="Reactome" id="R-DME-5389840">
    <property type="pathway name" value="Mitochondrial translation elongation"/>
</dbReference>
<dbReference type="Reactome" id="R-DME-5419276">
    <property type="pathway name" value="Mitochondrial translation termination"/>
</dbReference>
<dbReference type="BioGRID-ORCS" id="39627">
    <property type="hits" value="1 hit in 1 CRISPR screen"/>
</dbReference>
<dbReference type="GenomeRNAi" id="39627"/>
<dbReference type="PRO" id="PR:Q9VUJ0"/>
<dbReference type="Proteomes" id="UP000000803">
    <property type="component" value="Chromosome 3L"/>
</dbReference>
<dbReference type="Bgee" id="FBgn0036462">
    <property type="expression patterns" value="Expressed in secondary oocyte and 101 other cell types or tissues"/>
</dbReference>
<dbReference type="ExpressionAtlas" id="Q9VUJ0">
    <property type="expression patterns" value="baseline and differential"/>
</dbReference>
<dbReference type="GO" id="GO:0005762">
    <property type="term" value="C:mitochondrial large ribosomal subunit"/>
    <property type="evidence" value="ECO:0000250"/>
    <property type="project" value="UniProtKB"/>
</dbReference>
<dbReference type="GO" id="GO:0005739">
    <property type="term" value="C:mitochondrion"/>
    <property type="evidence" value="ECO:0000318"/>
    <property type="project" value="GO_Central"/>
</dbReference>
<dbReference type="GO" id="GO:0000166">
    <property type="term" value="F:nucleotide binding"/>
    <property type="evidence" value="ECO:0007669"/>
    <property type="project" value="InterPro"/>
</dbReference>
<dbReference type="GO" id="GO:0003735">
    <property type="term" value="F:structural constituent of ribosome"/>
    <property type="evidence" value="ECO:0000304"/>
    <property type="project" value="FlyBase"/>
</dbReference>
<dbReference type="GO" id="GO:0032543">
    <property type="term" value="P:mitochondrial translation"/>
    <property type="evidence" value="ECO:0000304"/>
    <property type="project" value="FlyBase"/>
</dbReference>
<dbReference type="GO" id="GO:0006417">
    <property type="term" value="P:regulation of translation"/>
    <property type="evidence" value="ECO:0007669"/>
    <property type="project" value="UniProtKB-KW"/>
</dbReference>
<dbReference type="GO" id="GO:0031047">
    <property type="term" value="P:regulatory ncRNA-mediated gene silencing"/>
    <property type="evidence" value="ECO:0007669"/>
    <property type="project" value="UniProtKB-KW"/>
</dbReference>
<dbReference type="CDD" id="cd01667">
    <property type="entry name" value="TGS_ThrRS"/>
    <property type="match status" value="1"/>
</dbReference>
<dbReference type="FunFam" id="3.30.980.10:FF:000006">
    <property type="entry name" value="39S ribosomal protein L39, mitochondrial"/>
    <property type="match status" value="1"/>
</dbReference>
<dbReference type="FunFam" id="3.10.20.30:FF:000031">
    <property type="entry name" value="Mitochondrial ribosomal protein L39"/>
    <property type="match status" value="1"/>
</dbReference>
<dbReference type="Gene3D" id="3.10.20.30">
    <property type="match status" value="1"/>
</dbReference>
<dbReference type="Gene3D" id="3.30.980.10">
    <property type="entry name" value="Threonyl-trna Synthetase, Chain A, domain 2"/>
    <property type="match status" value="1"/>
</dbReference>
<dbReference type="InterPro" id="IPR012675">
    <property type="entry name" value="Beta-grasp_dom_sf"/>
</dbReference>
<dbReference type="InterPro" id="IPR050062">
    <property type="entry name" value="Pro-tRNA_synthetase"/>
</dbReference>
<dbReference type="InterPro" id="IPR004095">
    <property type="entry name" value="TGS"/>
</dbReference>
<dbReference type="InterPro" id="IPR018163">
    <property type="entry name" value="Thr/Ala-tRNA-synth_IIc_edit"/>
</dbReference>
<dbReference type="PANTHER" id="PTHR42753:SF9">
    <property type="entry name" value="LARGE RIBOSOMAL SUBUNIT PROTEIN ML39"/>
    <property type="match status" value="1"/>
</dbReference>
<dbReference type="PANTHER" id="PTHR42753">
    <property type="entry name" value="MITOCHONDRIAL RIBOSOME PROTEIN L39/PROLYL-TRNA LIGASE FAMILY MEMBER"/>
    <property type="match status" value="1"/>
</dbReference>
<dbReference type="Pfam" id="PF02824">
    <property type="entry name" value="TGS"/>
    <property type="match status" value="1"/>
</dbReference>
<dbReference type="SUPFAM" id="SSF55186">
    <property type="entry name" value="ThrRS/AlaRS common domain"/>
    <property type="match status" value="1"/>
</dbReference>
<dbReference type="PROSITE" id="PS51880">
    <property type="entry name" value="TGS"/>
    <property type="match status" value="1"/>
</dbReference>